<name>HLDE_SODGM</name>
<accession>Q2NWD9</accession>
<protein>
    <recommendedName>
        <fullName evidence="1">Bifunctional protein HldE</fullName>
    </recommendedName>
    <domain>
        <recommendedName>
            <fullName evidence="1">D-beta-D-heptose 7-phosphate kinase</fullName>
            <ecNumber evidence="1">2.7.1.167</ecNumber>
        </recommendedName>
        <alternativeName>
            <fullName evidence="1">D-beta-D-heptose 7-phosphotransferase</fullName>
        </alternativeName>
        <alternativeName>
            <fullName evidence="1">D-glycero-beta-D-manno-heptose-7-phosphate kinase</fullName>
        </alternativeName>
    </domain>
    <domain>
        <recommendedName>
            <fullName evidence="1">D-beta-D-heptose 1-phosphate adenylyltransferase</fullName>
            <ecNumber evidence="1">2.7.7.70</ecNumber>
        </recommendedName>
        <alternativeName>
            <fullName evidence="1">D-glycero-beta-D-manno-heptose 1-phosphate adenylyltransferase</fullName>
        </alternativeName>
    </domain>
</protein>
<keyword id="KW-0067">ATP-binding</keyword>
<keyword id="KW-0119">Carbohydrate metabolism</keyword>
<keyword id="KW-0418">Kinase</keyword>
<keyword id="KW-0511">Multifunctional enzyme</keyword>
<keyword id="KW-0547">Nucleotide-binding</keyword>
<keyword id="KW-0548">Nucleotidyltransferase</keyword>
<keyword id="KW-0808">Transferase</keyword>
<proteinExistence type="inferred from homology"/>
<gene>
    <name evidence="1" type="primary">hldE</name>
    <name type="ordered locus">SG0261</name>
</gene>
<comment type="function">
    <text evidence="1">Catalyzes the phosphorylation of D-glycero-D-manno-heptose 7-phosphate at the C-1 position to selectively form D-glycero-beta-D-manno-heptose-1,7-bisphosphate.</text>
</comment>
<comment type="function">
    <text evidence="1">Catalyzes the ADP transfer from ATP to D-glycero-beta-D-manno-heptose 1-phosphate, yielding ADP-D-glycero-beta-D-manno-heptose.</text>
</comment>
<comment type="catalytic activity">
    <reaction evidence="1">
        <text>D-glycero-beta-D-manno-heptose 7-phosphate + ATP = D-glycero-beta-D-manno-heptose 1,7-bisphosphate + ADP + H(+)</text>
        <dbReference type="Rhea" id="RHEA:27473"/>
        <dbReference type="ChEBI" id="CHEBI:15378"/>
        <dbReference type="ChEBI" id="CHEBI:30616"/>
        <dbReference type="ChEBI" id="CHEBI:60204"/>
        <dbReference type="ChEBI" id="CHEBI:60208"/>
        <dbReference type="ChEBI" id="CHEBI:456216"/>
        <dbReference type="EC" id="2.7.1.167"/>
    </reaction>
</comment>
<comment type="catalytic activity">
    <reaction evidence="1">
        <text>D-glycero-beta-D-manno-heptose 1-phosphate + ATP + H(+) = ADP-D-glycero-beta-D-manno-heptose + diphosphate</text>
        <dbReference type="Rhea" id="RHEA:27465"/>
        <dbReference type="ChEBI" id="CHEBI:15378"/>
        <dbReference type="ChEBI" id="CHEBI:30616"/>
        <dbReference type="ChEBI" id="CHEBI:33019"/>
        <dbReference type="ChEBI" id="CHEBI:59967"/>
        <dbReference type="ChEBI" id="CHEBI:61593"/>
        <dbReference type="EC" id="2.7.7.70"/>
    </reaction>
</comment>
<comment type="pathway">
    <text evidence="1">Nucleotide-sugar biosynthesis; ADP-L-glycero-beta-D-manno-heptose biosynthesis; ADP-L-glycero-beta-D-manno-heptose from D-glycero-beta-D-manno-heptose 7-phosphate: step 1/4.</text>
</comment>
<comment type="pathway">
    <text evidence="1">Nucleotide-sugar biosynthesis; ADP-L-glycero-beta-D-manno-heptose biosynthesis; ADP-L-glycero-beta-D-manno-heptose from D-glycero-beta-D-manno-heptose 7-phosphate: step 3/4.</text>
</comment>
<comment type="subunit">
    <text evidence="1">Homodimer.</text>
</comment>
<comment type="similarity">
    <text evidence="1">In the N-terminal section; belongs to the carbohydrate kinase PfkB family.</text>
</comment>
<comment type="similarity">
    <text evidence="1">In the C-terminal section; belongs to the cytidylyltransferase family.</text>
</comment>
<reference key="1">
    <citation type="journal article" date="2006" name="Genome Res.">
        <title>Massive genome erosion and functional adaptations provide insights into the symbiotic lifestyle of Sodalis glossinidius in the tsetse host.</title>
        <authorList>
            <person name="Toh H."/>
            <person name="Weiss B.L."/>
            <person name="Perkin S.A.H."/>
            <person name="Yamashita A."/>
            <person name="Oshima K."/>
            <person name="Hattori M."/>
            <person name="Aksoy S."/>
        </authorList>
    </citation>
    <scope>NUCLEOTIDE SEQUENCE [LARGE SCALE GENOMIC DNA]</scope>
    <source>
        <strain>morsitans</strain>
    </source>
</reference>
<dbReference type="EC" id="2.7.1.167" evidence="1"/>
<dbReference type="EC" id="2.7.7.70" evidence="1"/>
<dbReference type="EMBL" id="AP008232">
    <property type="protein sequence ID" value="BAE73536.1"/>
    <property type="molecule type" value="Genomic_DNA"/>
</dbReference>
<dbReference type="RefSeq" id="WP_011410124.1">
    <property type="nucleotide sequence ID" value="NC_007712.1"/>
</dbReference>
<dbReference type="SMR" id="Q2NWD9"/>
<dbReference type="STRING" id="343509.SG0261"/>
<dbReference type="KEGG" id="sgl:SG0261"/>
<dbReference type="eggNOG" id="COG0615">
    <property type="taxonomic scope" value="Bacteria"/>
</dbReference>
<dbReference type="eggNOG" id="COG2870">
    <property type="taxonomic scope" value="Bacteria"/>
</dbReference>
<dbReference type="HOGENOM" id="CLU_021150_2_1_6"/>
<dbReference type="OrthoDB" id="9802794at2"/>
<dbReference type="UniPathway" id="UPA00356">
    <property type="reaction ID" value="UER00437"/>
</dbReference>
<dbReference type="UniPathway" id="UPA00356">
    <property type="reaction ID" value="UER00439"/>
</dbReference>
<dbReference type="Proteomes" id="UP000001932">
    <property type="component" value="Chromosome"/>
</dbReference>
<dbReference type="GO" id="GO:0005829">
    <property type="term" value="C:cytosol"/>
    <property type="evidence" value="ECO:0007669"/>
    <property type="project" value="TreeGrafter"/>
</dbReference>
<dbReference type="GO" id="GO:0005524">
    <property type="term" value="F:ATP binding"/>
    <property type="evidence" value="ECO:0007669"/>
    <property type="project" value="UniProtKB-UniRule"/>
</dbReference>
<dbReference type="GO" id="GO:0033785">
    <property type="term" value="F:heptose 7-phosphate kinase activity"/>
    <property type="evidence" value="ECO:0007669"/>
    <property type="project" value="UniProtKB-UniRule"/>
</dbReference>
<dbReference type="GO" id="GO:0033786">
    <property type="term" value="F:heptose-1-phosphate adenylyltransferase activity"/>
    <property type="evidence" value="ECO:0007669"/>
    <property type="project" value="UniProtKB-UniRule"/>
</dbReference>
<dbReference type="GO" id="GO:0016773">
    <property type="term" value="F:phosphotransferase activity, alcohol group as acceptor"/>
    <property type="evidence" value="ECO:0007669"/>
    <property type="project" value="InterPro"/>
</dbReference>
<dbReference type="GO" id="GO:0097171">
    <property type="term" value="P:ADP-L-glycero-beta-D-manno-heptose biosynthetic process"/>
    <property type="evidence" value="ECO:0007669"/>
    <property type="project" value="UniProtKB-UniPathway"/>
</dbReference>
<dbReference type="CDD" id="cd01172">
    <property type="entry name" value="RfaE_like"/>
    <property type="match status" value="1"/>
</dbReference>
<dbReference type="FunFam" id="3.40.1190.20:FF:000002">
    <property type="entry name" value="Bifunctional protein HldE"/>
    <property type="match status" value="1"/>
</dbReference>
<dbReference type="FunFam" id="3.40.50.620:FF:000028">
    <property type="entry name" value="Bifunctional protein HldE"/>
    <property type="match status" value="1"/>
</dbReference>
<dbReference type="Gene3D" id="3.40.1190.20">
    <property type="match status" value="1"/>
</dbReference>
<dbReference type="Gene3D" id="3.40.50.620">
    <property type="entry name" value="HUPs"/>
    <property type="match status" value="1"/>
</dbReference>
<dbReference type="HAMAP" id="MF_01603">
    <property type="entry name" value="HldE"/>
    <property type="match status" value="1"/>
</dbReference>
<dbReference type="InterPro" id="IPR023030">
    <property type="entry name" value="Bifunc_HldE"/>
</dbReference>
<dbReference type="InterPro" id="IPR002173">
    <property type="entry name" value="Carboh/pur_kinase_PfkB_CS"/>
</dbReference>
<dbReference type="InterPro" id="IPR004821">
    <property type="entry name" value="Cyt_trans-like"/>
</dbReference>
<dbReference type="InterPro" id="IPR011611">
    <property type="entry name" value="PfkB_dom"/>
</dbReference>
<dbReference type="InterPro" id="IPR011913">
    <property type="entry name" value="RfaE_dom_I"/>
</dbReference>
<dbReference type="InterPro" id="IPR011914">
    <property type="entry name" value="RfaE_dom_II"/>
</dbReference>
<dbReference type="InterPro" id="IPR029056">
    <property type="entry name" value="Ribokinase-like"/>
</dbReference>
<dbReference type="InterPro" id="IPR014729">
    <property type="entry name" value="Rossmann-like_a/b/a_fold"/>
</dbReference>
<dbReference type="NCBIfam" id="TIGR00125">
    <property type="entry name" value="cyt_tran_rel"/>
    <property type="match status" value="1"/>
</dbReference>
<dbReference type="NCBIfam" id="NF008454">
    <property type="entry name" value="PRK11316.1"/>
    <property type="match status" value="1"/>
</dbReference>
<dbReference type="NCBIfam" id="TIGR02198">
    <property type="entry name" value="rfaE_dom_I"/>
    <property type="match status" value="1"/>
</dbReference>
<dbReference type="NCBIfam" id="TIGR02199">
    <property type="entry name" value="rfaE_dom_II"/>
    <property type="match status" value="1"/>
</dbReference>
<dbReference type="PANTHER" id="PTHR46969">
    <property type="entry name" value="BIFUNCTIONAL PROTEIN HLDE"/>
    <property type="match status" value="1"/>
</dbReference>
<dbReference type="PANTHER" id="PTHR46969:SF1">
    <property type="entry name" value="BIFUNCTIONAL PROTEIN HLDE"/>
    <property type="match status" value="1"/>
</dbReference>
<dbReference type="Pfam" id="PF01467">
    <property type="entry name" value="CTP_transf_like"/>
    <property type="match status" value="1"/>
</dbReference>
<dbReference type="Pfam" id="PF00294">
    <property type="entry name" value="PfkB"/>
    <property type="match status" value="1"/>
</dbReference>
<dbReference type="SUPFAM" id="SSF52374">
    <property type="entry name" value="Nucleotidylyl transferase"/>
    <property type="match status" value="1"/>
</dbReference>
<dbReference type="SUPFAM" id="SSF53613">
    <property type="entry name" value="Ribokinase-like"/>
    <property type="match status" value="1"/>
</dbReference>
<dbReference type="PROSITE" id="PS00583">
    <property type="entry name" value="PFKB_KINASES_1"/>
    <property type="match status" value="1"/>
</dbReference>
<feature type="chain" id="PRO_0000255785" description="Bifunctional protein HldE">
    <location>
        <begin position="1"/>
        <end position="481"/>
    </location>
</feature>
<feature type="region of interest" description="Ribokinase">
    <location>
        <begin position="1"/>
        <end position="318"/>
    </location>
</feature>
<feature type="region of interest" description="Cytidylyltransferase">
    <location>
        <begin position="344"/>
        <end position="481"/>
    </location>
</feature>
<feature type="active site" evidence="1">
    <location>
        <position position="264"/>
    </location>
</feature>
<feature type="binding site" evidence="1">
    <location>
        <begin position="195"/>
        <end position="198"/>
    </location>
    <ligand>
        <name>ATP</name>
        <dbReference type="ChEBI" id="CHEBI:30616"/>
    </ligand>
</feature>
<sequence>MKVTLPDFRRAGVLVVGDVMLDRYWYGPTSRISPEAPVPIVKVDAIEERPGGAANVAMNIAALGCHSRLVGLTGIDDAARALGARLSEVDVTCDFVAVATHPTVTKLRVLSRNQQLIRLDFEQGFDDVDAAPMIERIQLALPKTGALVLSDYAKGALARVREMITLARAAGVPVLVDPKGTDFDRYRGATLLTPNLSEFEAVAGPCKDEETLVSRGMKLIADYQLSALLITRSEQGMTLLQPGKDPLHLPTQAQEVYDVTGAGDTVIGVLAAALAAGNSLEDSCFLANAAAGVVVGKLGTSTVSPIELENAIRGRAETGFGVMTESELKQAVAVARQRGEKVVMTNGIFDILHAGHVSYLANAQRLGDRLIVAVNSDESTKRLKGESRPVNPLAQRMTVLAALEAVDWVVPFSEDTPQRLIADVLPDVLVKGGDYQPHQIAGSKEVWDNGGDVLVLNFEDGCSTTNIINAIKRRAGQRTVV</sequence>
<organism>
    <name type="scientific">Sodalis glossinidius (strain morsitans)</name>
    <dbReference type="NCBI Taxonomy" id="343509"/>
    <lineage>
        <taxon>Bacteria</taxon>
        <taxon>Pseudomonadati</taxon>
        <taxon>Pseudomonadota</taxon>
        <taxon>Gammaproteobacteria</taxon>
        <taxon>Enterobacterales</taxon>
        <taxon>Bruguierivoracaceae</taxon>
        <taxon>Sodalis</taxon>
    </lineage>
</organism>
<evidence type="ECO:0000255" key="1">
    <source>
        <dbReference type="HAMAP-Rule" id="MF_01603"/>
    </source>
</evidence>